<feature type="chain" id="PRO_0000136665" description="Tryptophan--tRNA ligase">
    <location>
        <begin position="1"/>
        <end position="400"/>
    </location>
</feature>
<feature type="region of interest" description="Insert">
    <location>
        <begin position="173"/>
        <end position="241"/>
    </location>
</feature>
<feature type="region of interest" description="Disordered" evidence="2">
    <location>
        <begin position="280"/>
        <end position="305"/>
    </location>
</feature>
<feature type="short sequence motif" description="'HIGH' region">
    <location>
        <begin position="12"/>
        <end position="20"/>
    </location>
</feature>
<feature type="short sequence motif" description="'KMSKS' region">
    <location>
        <begin position="265"/>
        <end position="269"/>
    </location>
</feature>
<feature type="compositionally biased region" description="Basic and acidic residues" evidence="2">
    <location>
        <begin position="295"/>
        <end position="304"/>
    </location>
</feature>
<feature type="binding site" evidence="1">
    <location>
        <position position="268"/>
    </location>
    <ligand>
        <name>ATP</name>
        <dbReference type="ChEBI" id="CHEBI:30616"/>
    </ligand>
</feature>
<evidence type="ECO:0000250" key="1"/>
<evidence type="ECO:0000256" key="2">
    <source>
        <dbReference type="SAM" id="MobiDB-lite"/>
    </source>
</evidence>
<evidence type="ECO:0000305" key="3"/>
<name>SYW_RALN1</name>
<organism>
    <name type="scientific">Ralstonia nicotianae (strain ATCC BAA-1114 / GMI1000)</name>
    <name type="common">Ralstonia solanacearum</name>
    <dbReference type="NCBI Taxonomy" id="267608"/>
    <lineage>
        <taxon>Bacteria</taxon>
        <taxon>Pseudomonadati</taxon>
        <taxon>Pseudomonadota</taxon>
        <taxon>Betaproteobacteria</taxon>
        <taxon>Burkholderiales</taxon>
        <taxon>Burkholderiaceae</taxon>
        <taxon>Ralstonia</taxon>
        <taxon>Ralstonia solanacearum species complex</taxon>
    </lineage>
</organism>
<proteinExistence type="inferred from homology"/>
<accession>Q8Y0A1</accession>
<sequence>MFPERVLSGMRPTGALHLGHYHGVLKNWVRLQAEYPCFFFVADWHALTTHYESPEVIEESVWEMLIDWLAAGVDPTQATLFIQSRVPEHAELFLLLSMGTPLGWLERVPTYKDQIEKLKEKDLSTYGFLGYPLLQAADILIYRAGFVPVGEDQVPHVEMTREVARRFNYLYGREPGFEQKALDAAKKLGGKRAKLYLELRTAHQERGEDDALEQARALLAESQSLSMGDRERLFGYLEGARKIILPEPQVLLTEASRMPGLDGQKMSKSYGNTIRMREDKASVEKKVRTMPTDPARVRRTDPGDPGKCPVWQLHQVYSDADTREWVQKGCRSAGIGCLECKQPVIDGILREQQPMLERAQKYMDDPSLLRAIIADGCDTAHKVTQETMREVREAMGLTYS</sequence>
<protein>
    <recommendedName>
        <fullName>Tryptophan--tRNA ligase</fullName>
        <ecNumber>6.1.1.2</ecNumber>
    </recommendedName>
    <alternativeName>
        <fullName>Tryptophanyl-tRNA synthetase</fullName>
        <shortName>TrpRS</shortName>
    </alternativeName>
</protein>
<dbReference type="EC" id="6.1.1.2"/>
<dbReference type="EMBL" id="AL646052">
    <property type="protein sequence ID" value="CAD14845.1"/>
    <property type="molecule type" value="Genomic_DNA"/>
</dbReference>
<dbReference type="RefSeq" id="WP_011001093.1">
    <property type="nucleotide sequence ID" value="NC_003295.1"/>
</dbReference>
<dbReference type="SMR" id="Q8Y0A1"/>
<dbReference type="STRING" id="267608.RSc1143"/>
<dbReference type="EnsemblBacteria" id="CAD14845">
    <property type="protein sequence ID" value="CAD14845"/>
    <property type="gene ID" value="RSc1143"/>
</dbReference>
<dbReference type="KEGG" id="rso:RSc1143"/>
<dbReference type="PATRIC" id="fig|267608.8.peg.1161"/>
<dbReference type="eggNOG" id="COG0180">
    <property type="taxonomic scope" value="Bacteria"/>
</dbReference>
<dbReference type="HOGENOM" id="CLU_029244_0_1_4"/>
<dbReference type="Proteomes" id="UP000001436">
    <property type="component" value="Chromosome"/>
</dbReference>
<dbReference type="GO" id="GO:0005829">
    <property type="term" value="C:cytosol"/>
    <property type="evidence" value="ECO:0007669"/>
    <property type="project" value="TreeGrafter"/>
</dbReference>
<dbReference type="GO" id="GO:0005524">
    <property type="term" value="F:ATP binding"/>
    <property type="evidence" value="ECO:0007669"/>
    <property type="project" value="UniProtKB-KW"/>
</dbReference>
<dbReference type="GO" id="GO:0004830">
    <property type="term" value="F:tryptophan-tRNA ligase activity"/>
    <property type="evidence" value="ECO:0007669"/>
    <property type="project" value="UniProtKB-EC"/>
</dbReference>
<dbReference type="GO" id="GO:0006436">
    <property type="term" value="P:tryptophanyl-tRNA aminoacylation"/>
    <property type="evidence" value="ECO:0007669"/>
    <property type="project" value="InterPro"/>
</dbReference>
<dbReference type="CDD" id="cd00806">
    <property type="entry name" value="TrpRS_core"/>
    <property type="match status" value="1"/>
</dbReference>
<dbReference type="FunFam" id="1.10.240.10:FF:000005">
    <property type="entry name" value="Tryptophan--tRNA ligase"/>
    <property type="match status" value="1"/>
</dbReference>
<dbReference type="Gene3D" id="3.40.50.620">
    <property type="entry name" value="HUPs"/>
    <property type="match status" value="1"/>
</dbReference>
<dbReference type="Gene3D" id="1.10.240.10">
    <property type="entry name" value="Tyrosyl-Transfer RNA Synthetase"/>
    <property type="match status" value="1"/>
</dbReference>
<dbReference type="InterPro" id="IPR001412">
    <property type="entry name" value="aa-tRNA-synth_I_CS"/>
</dbReference>
<dbReference type="InterPro" id="IPR002305">
    <property type="entry name" value="aa-tRNA-synth_Ic"/>
</dbReference>
<dbReference type="InterPro" id="IPR014729">
    <property type="entry name" value="Rossmann-like_a/b/a_fold"/>
</dbReference>
<dbReference type="InterPro" id="IPR002306">
    <property type="entry name" value="Trp-tRNA-ligase"/>
</dbReference>
<dbReference type="InterPro" id="IPR050203">
    <property type="entry name" value="Trp-tRNA_synthetase"/>
</dbReference>
<dbReference type="NCBIfam" id="NF008922">
    <property type="entry name" value="PRK12283.1"/>
    <property type="match status" value="1"/>
</dbReference>
<dbReference type="NCBIfam" id="TIGR00233">
    <property type="entry name" value="trpS"/>
    <property type="match status" value="1"/>
</dbReference>
<dbReference type="PANTHER" id="PTHR43766">
    <property type="entry name" value="TRYPTOPHAN--TRNA LIGASE, MITOCHONDRIAL"/>
    <property type="match status" value="1"/>
</dbReference>
<dbReference type="PANTHER" id="PTHR43766:SF1">
    <property type="entry name" value="TRYPTOPHAN--TRNA LIGASE, MITOCHONDRIAL"/>
    <property type="match status" value="1"/>
</dbReference>
<dbReference type="Pfam" id="PF00579">
    <property type="entry name" value="tRNA-synt_1b"/>
    <property type="match status" value="2"/>
</dbReference>
<dbReference type="PRINTS" id="PR01039">
    <property type="entry name" value="TRNASYNTHTRP"/>
</dbReference>
<dbReference type="SUPFAM" id="SSF52374">
    <property type="entry name" value="Nucleotidylyl transferase"/>
    <property type="match status" value="1"/>
</dbReference>
<dbReference type="PROSITE" id="PS00178">
    <property type="entry name" value="AA_TRNA_LIGASE_I"/>
    <property type="match status" value="1"/>
</dbReference>
<reference key="1">
    <citation type="journal article" date="2002" name="Nature">
        <title>Genome sequence of the plant pathogen Ralstonia solanacearum.</title>
        <authorList>
            <person name="Salanoubat M."/>
            <person name="Genin S."/>
            <person name="Artiguenave F."/>
            <person name="Gouzy J."/>
            <person name="Mangenot S."/>
            <person name="Arlat M."/>
            <person name="Billault A."/>
            <person name="Brottier P."/>
            <person name="Camus J.-C."/>
            <person name="Cattolico L."/>
            <person name="Chandler M."/>
            <person name="Choisne N."/>
            <person name="Claudel-Renard C."/>
            <person name="Cunnac S."/>
            <person name="Demange N."/>
            <person name="Gaspin C."/>
            <person name="Lavie M."/>
            <person name="Moisan A."/>
            <person name="Robert C."/>
            <person name="Saurin W."/>
            <person name="Schiex T."/>
            <person name="Siguier P."/>
            <person name="Thebault P."/>
            <person name="Whalen M."/>
            <person name="Wincker P."/>
            <person name="Levy M."/>
            <person name="Weissenbach J."/>
            <person name="Boucher C.A."/>
        </authorList>
    </citation>
    <scope>NUCLEOTIDE SEQUENCE [LARGE SCALE GENOMIC DNA]</scope>
    <source>
        <strain>ATCC BAA-1114 / GMI1000</strain>
    </source>
</reference>
<comment type="catalytic activity">
    <reaction>
        <text>tRNA(Trp) + L-tryptophan + ATP = L-tryptophyl-tRNA(Trp) + AMP + diphosphate + H(+)</text>
        <dbReference type="Rhea" id="RHEA:24080"/>
        <dbReference type="Rhea" id="RHEA-COMP:9671"/>
        <dbReference type="Rhea" id="RHEA-COMP:9705"/>
        <dbReference type="ChEBI" id="CHEBI:15378"/>
        <dbReference type="ChEBI" id="CHEBI:30616"/>
        <dbReference type="ChEBI" id="CHEBI:33019"/>
        <dbReference type="ChEBI" id="CHEBI:57912"/>
        <dbReference type="ChEBI" id="CHEBI:78442"/>
        <dbReference type="ChEBI" id="CHEBI:78535"/>
        <dbReference type="ChEBI" id="CHEBI:456215"/>
        <dbReference type="EC" id="6.1.1.2"/>
    </reaction>
</comment>
<comment type="subunit">
    <text evidence="1">Homodimer.</text>
</comment>
<comment type="subcellular location">
    <subcellularLocation>
        <location evidence="1">Cytoplasm</location>
    </subcellularLocation>
</comment>
<comment type="similarity">
    <text evidence="3">Belongs to the class-I aminoacyl-tRNA synthetase family.</text>
</comment>
<gene>
    <name type="primary">trpS</name>
    <name type="ordered locus">RSc1143</name>
    <name type="ORF">RS04610</name>
</gene>
<keyword id="KW-0030">Aminoacyl-tRNA synthetase</keyword>
<keyword id="KW-0067">ATP-binding</keyword>
<keyword id="KW-0963">Cytoplasm</keyword>
<keyword id="KW-0436">Ligase</keyword>
<keyword id="KW-0547">Nucleotide-binding</keyword>
<keyword id="KW-0648">Protein biosynthesis</keyword>
<keyword id="KW-1185">Reference proteome</keyword>